<gene>
    <name type="primary">CSTF2</name>
</gene>
<protein>
    <recommendedName>
        <fullName>Cleavage stimulation factor subunit 2</fullName>
    </recommendedName>
    <alternativeName>
        <fullName>CF-1 64 kDa subunit</fullName>
    </alternativeName>
    <alternativeName>
        <fullName>Cleavage stimulation factor 64 kDa subunit</fullName>
        <shortName>CSTF 64 kDa subunit</shortName>
        <shortName>CstF-64</shortName>
    </alternativeName>
</protein>
<feature type="chain" id="PRO_0000081530" description="Cleavage stimulation factor subunit 2">
    <location>
        <begin position="1"/>
        <end position="572"/>
    </location>
</feature>
<feature type="domain" description="RRM" evidence="3">
    <location>
        <begin position="16"/>
        <end position="94"/>
    </location>
</feature>
<feature type="repeat" description="1; approximate">
    <location>
        <begin position="410"/>
        <end position="414"/>
    </location>
</feature>
<feature type="repeat" description="2">
    <location>
        <begin position="415"/>
        <end position="419"/>
    </location>
</feature>
<feature type="repeat" description="3; approximate">
    <location>
        <begin position="420"/>
        <end position="424"/>
    </location>
</feature>
<feature type="repeat" description="4; approximate">
    <location>
        <begin position="425"/>
        <end position="429"/>
    </location>
</feature>
<feature type="repeat" description="5">
    <location>
        <begin position="430"/>
        <end position="434"/>
    </location>
</feature>
<feature type="repeat" description="6">
    <location>
        <begin position="435"/>
        <end position="439"/>
    </location>
</feature>
<feature type="repeat" description="7">
    <location>
        <begin position="440"/>
        <end position="444"/>
    </location>
</feature>
<feature type="repeat" description="8">
    <location>
        <begin position="445"/>
        <end position="449"/>
    </location>
</feature>
<feature type="repeat" description="9; approximate">
    <location>
        <begin position="450"/>
        <end position="454"/>
    </location>
</feature>
<feature type="repeat" description="10">
    <location>
        <begin position="455"/>
        <end position="459"/>
    </location>
</feature>
<feature type="repeat" description="11; approximate">
    <location>
        <begin position="460"/>
        <end position="464"/>
    </location>
</feature>
<feature type="region of interest" description="Interactions with CSTF3 and SYMPK" evidence="1">
    <location>
        <begin position="108"/>
        <end position="248"/>
    </location>
</feature>
<feature type="region of interest" description="Disordered" evidence="4">
    <location>
        <begin position="208"/>
        <end position="230"/>
    </location>
</feature>
<feature type="region of interest" description="Disordered" evidence="4">
    <location>
        <begin position="322"/>
        <end position="382"/>
    </location>
</feature>
<feature type="region of interest" description="11 X 5 AA tandem repeats of M-E-A-R-[AG]">
    <location>
        <begin position="410"/>
        <end position="464"/>
    </location>
</feature>
<feature type="region of interest" description="Interaction with RPO2TC1" evidence="1">
    <location>
        <begin position="509"/>
        <end position="572"/>
    </location>
</feature>
<feature type="compositionally biased region" description="Basic and acidic residues" evidence="4">
    <location>
        <begin position="360"/>
        <end position="373"/>
    </location>
</feature>
<feature type="modified residue" description="Phosphoserine" evidence="2">
    <location>
        <position position="14"/>
    </location>
</feature>
<feature type="modified residue" description="Omega-N-methylarginine" evidence="2">
    <location>
        <position position="308"/>
    </location>
</feature>
<feature type="modified residue" description="Omega-N-methylarginine" evidence="2">
    <location>
        <position position="463"/>
    </location>
</feature>
<feature type="modified residue" description="Omega-N-methylarginine" evidence="2">
    <location>
        <position position="470"/>
    </location>
</feature>
<feature type="modified residue" description="Phosphoserine" evidence="2">
    <location>
        <position position="519"/>
    </location>
</feature>
<feature type="cross-link" description="Glycyl lysine isopeptide (Lys-Gly) (interchain with G-Cter in SUMO2)" evidence="2">
    <location>
        <position position="189"/>
    </location>
</feature>
<keyword id="KW-1017">Isopeptide bond</keyword>
<keyword id="KW-0488">Methylation</keyword>
<keyword id="KW-0507">mRNA processing</keyword>
<keyword id="KW-0539">Nucleus</keyword>
<keyword id="KW-0597">Phosphoprotein</keyword>
<keyword id="KW-1185">Reference proteome</keyword>
<keyword id="KW-0677">Repeat</keyword>
<keyword id="KW-0694">RNA-binding</keyword>
<keyword id="KW-0832">Ubl conjugation</keyword>
<dbReference type="EMBL" id="AY130297">
    <property type="protein sequence ID" value="AAN05427.1"/>
    <property type="molecule type" value="mRNA"/>
</dbReference>
<dbReference type="RefSeq" id="NP_777110.1">
    <property type="nucleotide sequence ID" value="NM_174685.2"/>
</dbReference>
<dbReference type="BMRB" id="Q8HXM1"/>
<dbReference type="SMR" id="Q8HXM1"/>
<dbReference type="FunCoup" id="Q8HXM1">
    <property type="interactions" value="4040"/>
</dbReference>
<dbReference type="STRING" id="9913.ENSBTAP00000042892"/>
<dbReference type="PeptideAtlas" id="Q8HXM1"/>
<dbReference type="GeneID" id="282588"/>
<dbReference type="KEGG" id="bta:282588"/>
<dbReference type="CTD" id="1478"/>
<dbReference type="VEuPathDB" id="HostDB:ENSBTAG00000003547"/>
<dbReference type="eggNOG" id="KOG0108">
    <property type="taxonomic scope" value="Eukaryota"/>
</dbReference>
<dbReference type="HOGENOM" id="CLU_028601_3_1_1"/>
<dbReference type="InParanoid" id="Q8HXM1"/>
<dbReference type="OrthoDB" id="272703at2759"/>
<dbReference type="Reactome" id="R-BTA-72187">
    <property type="pathway name" value="mRNA 3'-end processing"/>
</dbReference>
<dbReference type="Reactome" id="R-BTA-72203">
    <property type="pathway name" value="Processing of Capped Intron-Containing Pre-mRNA"/>
</dbReference>
<dbReference type="Reactome" id="R-BTA-73856">
    <property type="pathway name" value="RNA Polymerase II Transcription Termination"/>
</dbReference>
<dbReference type="Reactome" id="R-BTA-77595">
    <property type="pathway name" value="Processing of Intronless Pre-mRNAs"/>
</dbReference>
<dbReference type="Proteomes" id="UP000009136">
    <property type="component" value="Chromosome X"/>
</dbReference>
<dbReference type="Bgee" id="ENSBTAG00000003547">
    <property type="expression patterns" value="Expressed in conceptus and 106 other cell types or tissues"/>
</dbReference>
<dbReference type="GO" id="GO:0071920">
    <property type="term" value="C:cleavage body"/>
    <property type="evidence" value="ECO:0000250"/>
    <property type="project" value="UniProtKB"/>
</dbReference>
<dbReference type="GO" id="GO:0005847">
    <property type="term" value="C:mRNA cleavage and polyadenylation specificity factor complex"/>
    <property type="evidence" value="ECO:0000250"/>
    <property type="project" value="UniProtKB"/>
</dbReference>
<dbReference type="GO" id="GO:0005634">
    <property type="term" value="C:nucleus"/>
    <property type="evidence" value="ECO:0000250"/>
    <property type="project" value="UniProtKB"/>
</dbReference>
<dbReference type="GO" id="GO:0003729">
    <property type="term" value="F:mRNA binding"/>
    <property type="evidence" value="ECO:0000318"/>
    <property type="project" value="GO_Central"/>
</dbReference>
<dbReference type="GO" id="GO:0031124">
    <property type="term" value="P:mRNA 3'-end processing"/>
    <property type="evidence" value="ECO:0000250"/>
    <property type="project" value="UniProtKB"/>
</dbReference>
<dbReference type="CDD" id="cd12671">
    <property type="entry name" value="RRM_CSTF2_CSTF2T"/>
    <property type="match status" value="1"/>
</dbReference>
<dbReference type="FunFam" id="1.10.20.70:FF:000001">
    <property type="entry name" value="Cleavage stimulation factor subunit 2"/>
    <property type="match status" value="1"/>
</dbReference>
<dbReference type="FunFam" id="1.25.40.630:FF:000001">
    <property type="entry name" value="Cleavage stimulation factor subunit 2"/>
    <property type="match status" value="1"/>
</dbReference>
<dbReference type="FunFam" id="3.30.70.330:FF:000061">
    <property type="entry name" value="cleavage stimulation factor subunit 2 isoform X1"/>
    <property type="match status" value="1"/>
</dbReference>
<dbReference type="Gene3D" id="1.25.40.630">
    <property type="match status" value="1"/>
</dbReference>
<dbReference type="Gene3D" id="3.30.70.330">
    <property type="match status" value="1"/>
</dbReference>
<dbReference type="Gene3D" id="1.10.20.70">
    <property type="entry name" value="Transcription termination and cleavage factor, C-terminal domain"/>
    <property type="match status" value="1"/>
</dbReference>
<dbReference type="InterPro" id="IPR025742">
    <property type="entry name" value="CSTF2_hinge"/>
</dbReference>
<dbReference type="InterPro" id="IPR026896">
    <property type="entry name" value="CSTF_C"/>
</dbReference>
<dbReference type="InterPro" id="IPR038192">
    <property type="entry name" value="CSTF_C_sf"/>
</dbReference>
<dbReference type="InterPro" id="IPR012677">
    <property type="entry name" value="Nucleotide-bd_a/b_plait_sf"/>
</dbReference>
<dbReference type="InterPro" id="IPR035979">
    <property type="entry name" value="RBD_domain_sf"/>
</dbReference>
<dbReference type="InterPro" id="IPR000504">
    <property type="entry name" value="RRM_dom"/>
</dbReference>
<dbReference type="PANTHER" id="PTHR45735">
    <property type="entry name" value="CLEAVAGE STIMULATION FACTOR SUBUNIT 2"/>
    <property type="match status" value="1"/>
</dbReference>
<dbReference type="PANTHER" id="PTHR45735:SF6">
    <property type="entry name" value="CLEAVAGE STIMULATION FACTOR SUBUNIT 2"/>
    <property type="match status" value="1"/>
</dbReference>
<dbReference type="Pfam" id="PF14327">
    <property type="entry name" value="CSTF2_hinge"/>
    <property type="match status" value="1"/>
</dbReference>
<dbReference type="Pfam" id="PF14304">
    <property type="entry name" value="CSTF_C"/>
    <property type="match status" value="1"/>
</dbReference>
<dbReference type="Pfam" id="PF00076">
    <property type="entry name" value="RRM_1"/>
    <property type="match status" value="1"/>
</dbReference>
<dbReference type="SMART" id="SM00360">
    <property type="entry name" value="RRM"/>
    <property type="match status" value="1"/>
</dbReference>
<dbReference type="SUPFAM" id="SSF54928">
    <property type="entry name" value="RNA-binding domain, RBD"/>
    <property type="match status" value="1"/>
</dbReference>
<dbReference type="PROSITE" id="PS50102">
    <property type="entry name" value="RRM"/>
    <property type="match status" value="1"/>
</dbReference>
<comment type="function">
    <text evidence="2">One of the multiple factors required for polyadenylation and 3'-end cleavage of mammalian pre-mRNAs. This subunit is directly involved in the binding to pre-mRNAs (By similarity).</text>
</comment>
<comment type="subunit">
    <text evidence="2">The CSTF complex is composed of CSTF1 (50 kDa subunit), CSTF2 (64 kDa subunit) and CSTF3 (77 kDa subunit). CSTF2 directly interacts with CSTF3, SYMPK and RPO2TC1. Interacts with HSF1 in heat-stressed cells (By similarity). Interacts with CPSF2, CPSF3 and FIP1L1. Interacts with DDX1 (By similarity).</text>
</comment>
<comment type="subcellular location">
    <subcellularLocation>
        <location evidence="2">Nucleus</location>
    </subcellularLocation>
    <text evidence="2">Localized with DDX1 in cleavage bodies.</text>
</comment>
<organism>
    <name type="scientific">Bos taurus</name>
    <name type="common">Bovine</name>
    <dbReference type="NCBI Taxonomy" id="9913"/>
    <lineage>
        <taxon>Eukaryota</taxon>
        <taxon>Metazoa</taxon>
        <taxon>Chordata</taxon>
        <taxon>Craniata</taxon>
        <taxon>Vertebrata</taxon>
        <taxon>Euteleostomi</taxon>
        <taxon>Mammalia</taxon>
        <taxon>Eutheria</taxon>
        <taxon>Laurasiatheria</taxon>
        <taxon>Artiodactyla</taxon>
        <taxon>Ruminantia</taxon>
        <taxon>Pecora</taxon>
        <taxon>Bovidae</taxon>
        <taxon>Bovinae</taxon>
        <taxon>Bos</taxon>
    </lineage>
</organism>
<proteinExistence type="evidence at transcript level"/>
<evidence type="ECO:0000250" key="1"/>
<evidence type="ECO:0000250" key="2">
    <source>
        <dbReference type="UniProtKB" id="P33240"/>
    </source>
</evidence>
<evidence type="ECO:0000255" key="3">
    <source>
        <dbReference type="PROSITE-ProRule" id="PRU00176"/>
    </source>
</evidence>
<evidence type="ECO:0000256" key="4">
    <source>
        <dbReference type="SAM" id="MobiDB-lite"/>
    </source>
</evidence>
<reference key="1">
    <citation type="journal article" date="2002" name="Genomics">
        <title>The gene CSTF2T, encoding the human variant CstF-64 polyadenylation protein CstF-64, lacks introns and may be associated with male sterility.</title>
        <authorList>
            <person name="Dass B."/>
            <person name="McDaniel L."/>
            <person name="Schultz R.A."/>
            <person name="Attaya E."/>
            <person name="MacDonald C.C."/>
        </authorList>
    </citation>
    <scope>NUCLEOTIDE SEQUENCE [MRNA]</scope>
</reference>
<sequence>MAGLTVRDPAVDRSLRSVFVGNIPYEATEEQLKDIFSEVGPVVSFRLVYDRETGKPKGYGFCEYQDQETALSAMRNLNGREFSGRALRVDNAASEKNKEELKSLGTGAPVIESPYGETISPEDAPESISKAVASLPPEQMFELMKQMKLCVQNSPQEARNMLLQNPQLAYALLQAQVVMRIVDPEIALKILHRQTNIPTLIAGNPQTVHSAGPGSGSSVSMNQQNPQTPQAQTLSGMHVNGAPPLMQASLQAGVAAPGQIPATVTGPGPGSLAPAGGMQAQVGMPGSGPVSMERGQVPMQDPRAAMQRGPLPANVPTPRGLLGDAPNDPRGGTLLSVTGEVEPRGYLGPPHQGPPMHHVPGHDSRGPPPHEMRGGPLTEPRPLMAEPRGPMIDQRGPPLDGRGGRDPRGIDARAMEARGLDARGLEARAMEARAMEARAMEARAMEARAMEVRGMEARSMDTRGPVPGPRGPMPSGIQGPSPINMGAVGPQGSRQVPVMQGAGMQGASIQGGGQPGGFSPGQNQVTPQDHEKAALIMQVLQLTADQIAMLPPEQRQSILILKEQIQKSTGAP</sequence>
<name>CSTF2_BOVIN</name>
<accession>Q8HXM1</accession>